<protein>
    <recommendedName>
        <fullName>Acidic phospholipase A2 CHA-E6b</fullName>
        <shortName>svPLA2</shortName>
        <ecNumber>3.1.1.4</ecNumber>
    </recommendedName>
    <alternativeName>
        <fullName>Phosphatidylcholine 2-acylhydrolase</fullName>
    </alternativeName>
</protein>
<accession>P0DJR2</accession>
<feature type="chain" id="PRO_0000419286" description="Acidic phospholipase A2 CHA-E6b">
    <location>
        <begin position="1"/>
        <end position="23" status="greater than"/>
    </location>
</feature>
<feature type="non-terminal residue">
    <location>
        <position position="23"/>
    </location>
</feature>
<evidence type="ECO:0000250" key="1"/>
<evidence type="ECO:0000269" key="2">
    <source>
    </source>
</evidence>
<evidence type="ECO:0000305" key="3"/>
<sequence>SLLQFEMMIMEVAKRSGIFWYSA</sequence>
<keyword id="KW-1203">Blood coagulation cascade inhibiting toxin</keyword>
<keyword id="KW-0106">Calcium</keyword>
<keyword id="KW-0903">Direct protein sequencing</keyword>
<keyword id="KW-1015">Disulfide bond</keyword>
<keyword id="KW-1199">Hemostasis impairing toxin</keyword>
<keyword id="KW-0378">Hydrolase</keyword>
<keyword id="KW-0442">Lipid degradation</keyword>
<keyword id="KW-0443">Lipid metabolism</keyword>
<keyword id="KW-0479">Metal-binding</keyword>
<keyword id="KW-1201">Platelet aggregation inhibiting toxin</keyword>
<keyword id="KW-0964">Secreted</keyword>
<keyword id="KW-0800">Toxin</keyword>
<proteinExistence type="evidence at protein level"/>
<dbReference type="EC" id="3.1.1.4"/>
<dbReference type="GO" id="GO:0005576">
    <property type="term" value="C:extracellular region"/>
    <property type="evidence" value="ECO:0007669"/>
    <property type="project" value="UniProtKB-SubCell"/>
</dbReference>
<dbReference type="GO" id="GO:0046872">
    <property type="term" value="F:metal ion binding"/>
    <property type="evidence" value="ECO:0007669"/>
    <property type="project" value="UniProtKB-KW"/>
</dbReference>
<dbReference type="GO" id="GO:0004623">
    <property type="term" value="F:phospholipase A2 activity"/>
    <property type="evidence" value="ECO:0007669"/>
    <property type="project" value="UniProtKB-EC"/>
</dbReference>
<dbReference type="GO" id="GO:0090729">
    <property type="term" value="F:toxin activity"/>
    <property type="evidence" value="ECO:0007669"/>
    <property type="project" value="UniProtKB-KW"/>
</dbReference>
<dbReference type="GO" id="GO:0016042">
    <property type="term" value="P:lipid catabolic process"/>
    <property type="evidence" value="ECO:0007669"/>
    <property type="project" value="UniProtKB-KW"/>
</dbReference>
<organism>
    <name type="scientific">Crotalus horridus</name>
    <name type="common">Timber rattlesnake</name>
    <dbReference type="NCBI Taxonomy" id="35024"/>
    <lineage>
        <taxon>Eukaryota</taxon>
        <taxon>Metazoa</taxon>
        <taxon>Chordata</taxon>
        <taxon>Craniata</taxon>
        <taxon>Vertebrata</taxon>
        <taxon>Euteleostomi</taxon>
        <taxon>Lepidosauria</taxon>
        <taxon>Squamata</taxon>
        <taxon>Bifurcata</taxon>
        <taxon>Unidentata</taxon>
        <taxon>Episquamata</taxon>
        <taxon>Toxicofera</taxon>
        <taxon>Serpentes</taxon>
        <taxon>Colubroidea</taxon>
        <taxon>Viperidae</taxon>
        <taxon>Crotalinae</taxon>
        <taxon>Crotalus</taxon>
    </lineage>
</organism>
<reference key="1">
    <citation type="journal article" date="2010" name="Toxicon">
        <title>Absence of phospholipase A(2) in most Crotalus horridus venom due to translation blockage: comparison with Crotalus horridus atricaudatus venom.</title>
        <authorList>
            <person name="Wang Y.-M."/>
            <person name="Parmelee J."/>
            <person name="Guo Y.-W."/>
            <person name="Tsai I.-H."/>
        </authorList>
    </citation>
    <scope>PROTEIN SEQUENCE</scope>
    <scope>FUNCTION</scope>
    <scope>CATALYTIC ACTIVITY</scope>
    <scope>MASS SPECTROMETRY</scope>
    <source>
        <strain>South Carolina</strain>
        <tissue>Venom</tissue>
    </source>
</reference>
<comment type="function">
    <text evidence="2">Snake venom phospholipase A2 (PLA2) that shows high lipolytic (1200 umol/mg/min) and weak ADP-induced platelet aggregation activities. Also shows weak anticoagulant activity (IC(50) of about 1.0 uM). PLA2 catalyzes the calcium-dependent hydrolysis of the 2-acyl groups in 3-sn-phosphoglycerides.</text>
</comment>
<comment type="catalytic activity">
    <reaction evidence="2">
        <text>a 1,2-diacyl-sn-glycero-3-phosphocholine + H2O = a 1-acyl-sn-glycero-3-phosphocholine + a fatty acid + H(+)</text>
        <dbReference type="Rhea" id="RHEA:15801"/>
        <dbReference type="ChEBI" id="CHEBI:15377"/>
        <dbReference type="ChEBI" id="CHEBI:15378"/>
        <dbReference type="ChEBI" id="CHEBI:28868"/>
        <dbReference type="ChEBI" id="CHEBI:57643"/>
        <dbReference type="ChEBI" id="CHEBI:58168"/>
        <dbReference type="EC" id="3.1.1.4"/>
    </reaction>
</comment>
<comment type="cofactor">
    <cofactor evidence="1">
        <name>Ca(2+)</name>
        <dbReference type="ChEBI" id="CHEBI:29108"/>
    </cofactor>
    <text evidence="1">Binds 1 Ca(2+) ion.</text>
</comment>
<comment type="subcellular location">
    <subcellularLocation>
        <location>Secreted</location>
    </subcellularLocation>
</comment>
<comment type="tissue specificity">
    <text>Expressed by the venom gland.</text>
</comment>
<comment type="PTM">
    <text evidence="1">Contains 7 disulfide bonds.</text>
</comment>
<comment type="mass spectrometry"/>
<comment type="miscellaneous">
    <text>The subspecies C.h.atricaudatus mentioned in PubMed:20347857 is currently considered invalid. However, since different origins of specimens explain sequence variations, the specimen origins are indicated under strain in the reference section (in PubMed:20347857, South Carolina to C.h.atricaudatus).</text>
</comment>
<comment type="similarity">
    <text evidence="3">Belongs to the phospholipase A2 family. Group II subfamily. D49 sub-subfamily.</text>
</comment>
<name>PA2AB_CROHD</name>